<gene>
    <name evidence="1" type="primary">bshC</name>
    <name type="ordered locus">FP1408</name>
</gene>
<name>BSHC_FLAPJ</name>
<comment type="similarity">
    <text evidence="1">Belongs to the BshC family.</text>
</comment>
<dbReference type="EC" id="6.-.-.-" evidence="1"/>
<dbReference type="EMBL" id="AM398681">
    <property type="protein sequence ID" value="CAL43484.1"/>
    <property type="molecule type" value="Genomic_DNA"/>
</dbReference>
<dbReference type="RefSeq" id="WP_011963529.1">
    <property type="nucleotide sequence ID" value="NC_009613.3"/>
</dbReference>
<dbReference type="RefSeq" id="YP_001296293.1">
    <property type="nucleotide sequence ID" value="NC_009613.3"/>
</dbReference>
<dbReference type="SMR" id="A6GZG1"/>
<dbReference type="STRING" id="402612.FP1408"/>
<dbReference type="EnsemblBacteria" id="CAL43484">
    <property type="protein sequence ID" value="CAL43484"/>
    <property type="gene ID" value="FP1408"/>
</dbReference>
<dbReference type="GeneID" id="66552866"/>
<dbReference type="KEGG" id="fps:FP1408"/>
<dbReference type="PATRIC" id="fig|402612.5.peg.1421"/>
<dbReference type="eggNOG" id="COG4365">
    <property type="taxonomic scope" value="Bacteria"/>
</dbReference>
<dbReference type="HOGENOM" id="CLU_022249_2_0_10"/>
<dbReference type="OrthoDB" id="9765151at2"/>
<dbReference type="Proteomes" id="UP000006394">
    <property type="component" value="Chromosome"/>
</dbReference>
<dbReference type="GO" id="GO:0016874">
    <property type="term" value="F:ligase activity"/>
    <property type="evidence" value="ECO:0007669"/>
    <property type="project" value="UniProtKB-UniRule"/>
</dbReference>
<dbReference type="HAMAP" id="MF_01867">
    <property type="entry name" value="BshC"/>
    <property type="match status" value="1"/>
</dbReference>
<dbReference type="InterPro" id="IPR011199">
    <property type="entry name" value="Bacillithiol_biosynth_BshC"/>
</dbReference>
<dbReference type="InterPro" id="IPR055399">
    <property type="entry name" value="CC_BshC"/>
</dbReference>
<dbReference type="InterPro" id="IPR055398">
    <property type="entry name" value="Rossmann-like_BshC"/>
</dbReference>
<dbReference type="NCBIfam" id="TIGR03998">
    <property type="entry name" value="thiol_BshC"/>
    <property type="match status" value="1"/>
</dbReference>
<dbReference type="Pfam" id="PF24850">
    <property type="entry name" value="CC_BshC"/>
    <property type="match status" value="1"/>
</dbReference>
<dbReference type="Pfam" id="PF10079">
    <property type="entry name" value="Rossmann-like_BshC"/>
    <property type="match status" value="1"/>
</dbReference>
<dbReference type="PIRSF" id="PIRSF012535">
    <property type="entry name" value="UCP012535"/>
    <property type="match status" value="1"/>
</dbReference>
<sequence>MPTDCISYQKSGYFSKLIVDYLDKKPELKELYNYFPSIENFKHQIEEKNHNFKNNDKRKILVDALKKQYTNFEISELTQKNIVLLENEKTFTITTGHQLNLFTGPLYFLYKIVSTINLCKELKRNYPEYNFVPIYWMATEDHDFEEINHFNFKGKKLSWNTASKGAVGRLSTKSLTNFFTVFKAELGLSNNAEYIKKLFSDSYLQHSNLADATRFLANKLFGKYGLVILDGDAAALKKQFIPYIKDELLYQNSNKKVLESIAKLKDYSIQVNPREINLFYIEANLRERIIYENGNYKVNNTFISFSETEILKLVDANSEKFSPNVILRPLYQEVILPNLAYIGGGGEIAYWLELKAMFDFHKVTFPILLVRNSAVLINEKQEKNRQKLNITWQELFLKQQVLIDAKTKEYSEIKIDFSEQKAHLKKQFEALHQIALKTDKSFSGAVKAQEKKQTKGLDNLEKRLLKAEKKMHSEKLKKIIELQNNLFPNESLQERKSNFSEIYVEIGEELINKISDQLHPLAATFSIIKHA</sequence>
<keyword id="KW-0175">Coiled coil</keyword>
<keyword id="KW-0436">Ligase</keyword>
<keyword id="KW-1185">Reference proteome</keyword>
<protein>
    <recommendedName>
        <fullName evidence="1">Putative cysteine ligase BshC</fullName>
        <ecNumber evidence="1">6.-.-.-</ecNumber>
    </recommendedName>
</protein>
<feature type="chain" id="PRO_0000378237" description="Putative cysteine ligase BshC">
    <location>
        <begin position="1"/>
        <end position="531"/>
    </location>
</feature>
<feature type="coiled-coil region" evidence="1">
    <location>
        <begin position="447"/>
        <end position="481"/>
    </location>
</feature>
<proteinExistence type="inferred from homology"/>
<accession>A6GZG1</accession>
<evidence type="ECO:0000255" key="1">
    <source>
        <dbReference type="HAMAP-Rule" id="MF_01867"/>
    </source>
</evidence>
<organism>
    <name type="scientific">Flavobacterium psychrophilum (strain ATCC 49511 / DSM 21280 / CIP 103535 / JIP02/86)</name>
    <dbReference type="NCBI Taxonomy" id="402612"/>
    <lineage>
        <taxon>Bacteria</taxon>
        <taxon>Pseudomonadati</taxon>
        <taxon>Bacteroidota</taxon>
        <taxon>Flavobacteriia</taxon>
        <taxon>Flavobacteriales</taxon>
        <taxon>Flavobacteriaceae</taxon>
        <taxon>Flavobacterium</taxon>
    </lineage>
</organism>
<reference key="1">
    <citation type="journal article" date="2007" name="Nat. Biotechnol.">
        <title>Complete genome sequence of the fish pathogen Flavobacterium psychrophilum.</title>
        <authorList>
            <person name="Duchaud E."/>
            <person name="Boussaha M."/>
            <person name="Loux V."/>
            <person name="Bernardet J.-F."/>
            <person name="Michel C."/>
            <person name="Kerouault B."/>
            <person name="Mondot S."/>
            <person name="Nicolas P."/>
            <person name="Bossy R."/>
            <person name="Caron C."/>
            <person name="Bessieres P."/>
            <person name="Gibrat J.-F."/>
            <person name="Claverol S."/>
            <person name="Dumetz F."/>
            <person name="Le Henaff M."/>
            <person name="Benmansour A."/>
        </authorList>
    </citation>
    <scope>NUCLEOTIDE SEQUENCE [LARGE SCALE GENOMIC DNA]</scope>
    <source>
        <strain>ATCC 49511 / DSM 21280 / CIP 103535 / JIP02/86</strain>
    </source>
</reference>